<comment type="function">
    <text evidence="1 2">Plays an important role in membrane trafficking through the secretory apparatus. Not involved in endocytic trafficking to lysosomes. Acts in concert with CCZ1, as a guanine exchange factor (GEF) for RAB7, promotes the exchange of GDP to GTP, converting it from an inactive GDP-bound form into an active GTP-bound form.</text>
</comment>
<comment type="subunit">
    <text evidence="2">Interacts with CCZ1 (By similarity). Found in a complex with RMC1, CCZ1, MON1A and MON1B (By similarity). The MON1A-CCZ1B complex interacts with RIMOC1 (By similarity). The MON1A-CCZ1B complex interacts with RAB7A and this interaction is enhanced in the presence of RIMOC1 (By similarity).</text>
</comment>
<comment type="similarity">
    <text evidence="4">Belongs to the MON1/SAND family.</text>
</comment>
<comment type="sequence caution" evidence="4">
    <conflict type="erroneous initiation">
        <sequence resource="EMBL-CDS" id="BAB46888"/>
    </conflict>
    <text>Extended N-terminus.</text>
</comment>
<organism>
    <name type="scientific">Macaca fascicularis</name>
    <name type="common">Crab-eating macaque</name>
    <name type="synonym">Cynomolgus monkey</name>
    <dbReference type="NCBI Taxonomy" id="9541"/>
    <lineage>
        <taxon>Eukaryota</taxon>
        <taxon>Metazoa</taxon>
        <taxon>Chordata</taxon>
        <taxon>Craniata</taxon>
        <taxon>Vertebrata</taxon>
        <taxon>Euteleostomi</taxon>
        <taxon>Mammalia</taxon>
        <taxon>Eutheria</taxon>
        <taxon>Euarchontoglires</taxon>
        <taxon>Primates</taxon>
        <taxon>Haplorrhini</taxon>
        <taxon>Catarrhini</taxon>
        <taxon>Cercopithecidae</taxon>
        <taxon>Cercopithecinae</taxon>
        <taxon>Macaca</taxon>
    </lineage>
</organism>
<protein>
    <recommendedName>
        <fullName>Vacuolar fusion protein MON1 homolog A</fullName>
    </recommendedName>
</protein>
<evidence type="ECO:0000250" key="1">
    <source>
        <dbReference type="UniProtKB" id="Q6PDG8"/>
    </source>
</evidence>
<evidence type="ECO:0000250" key="2">
    <source>
        <dbReference type="UniProtKB" id="Q86VX9"/>
    </source>
</evidence>
<evidence type="ECO:0000256" key="3">
    <source>
        <dbReference type="SAM" id="MobiDB-lite"/>
    </source>
</evidence>
<evidence type="ECO:0000305" key="4"/>
<gene>
    <name type="primary">MON1A</name>
    <name type="ORF">QtrA-12666</name>
</gene>
<feature type="chain" id="PRO_0000285762" description="Vacuolar fusion protein MON1 homolog A">
    <location>
        <begin position="1"/>
        <end position="555"/>
    </location>
</feature>
<feature type="region of interest" description="Disordered" evidence="3">
    <location>
        <begin position="1"/>
        <end position="87"/>
    </location>
</feature>
<feature type="region of interest" description="Disordered" evidence="3">
    <location>
        <begin position="114"/>
        <end position="147"/>
    </location>
</feature>
<feature type="compositionally biased region" description="Basic and acidic residues" evidence="3">
    <location>
        <begin position="1"/>
        <end position="12"/>
    </location>
</feature>
<feature type="modified residue" description="Phosphoserine" evidence="2">
    <location>
        <position position="31"/>
    </location>
</feature>
<feature type="modified residue" description="Phosphoserine" evidence="1">
    <location>
        <position position="56"/>
    </location>
</feature>
<feature type="modified residue" description="Phosphothreonine" evidence="2">
    <location>
        <position position="61"/>
    </location>
</feature>
<feature type="modified residue" description="Phosphoserine" evidence="2">
    <location>
        <position position="91"/>
    </location>
</feature>
<proteinExistence type="evidence at transcript level"/>
<accession>Q95KG9</accession>
<name>MON1A_MACFA</name>
<sequence>MAADMQRKRSSECPDGTLTPSDGHSVERAESPTPGLAQGMEPGAGQEGAMFVHARSYEDLTESEDGAASGDSPKEGARGPPPLPADMRQISQDFSELSTQLTGVARDLQEEMLPGSSEDWLDPPGAVGRPATEPPREGTAEGDEEDATEAWRLHQKHVFVLSEAGKPVYSRYGSEEALSSTMGVMVALVSFLEADKNAIRSIHADGYKVVFVRRSPLVLVAVARTRQSAQELAQELLYIYYQILSLLTGAQLSHIFQQKQNYDLRRLLSGSERITDNLLQLMARDPSFLMGAARCLPLAAAVRDTVSASLQQARARSLVFSILLARNQLVALVRRKDQFLHPIDLHLLFNLISSSSSFREGEAWTPVCLPKFNAAGFFHAHISYLEPDTDLCLLFVSTDREDFFAVSDCRRRFQERLRKRGAHLALREALRTPYYSVAQVGIPDLRHFLYKSKSSGLFTSPEIEAPYTSEEEQERLLGLYQYLHSRAHNASRPLKTIYYTGPNENLLAWVTGAFELYMCYSPLGTKASAVSAIHKLMRWIRKEEDRLFILTPLTY</sequence>
<keyword id="KW-0344">Guanine-nucleotide releasing factor</keyword>
<keyword id="KW-0597">Phosphoprotein</keyword>
<keyword id="KW-1185">Reference proteome</keyword>
<dbReference type="EMBL" id="AB060880">
    <property type="protein sequence ID" value="BAB46888.1"/>
    <property type="status" value="ALT_INIT"/>
    <property type="molecule type" value="mRNA"/>
</dbReference>
<dbReference type="RefSeq" id="XP_005547220.2">
    <property type="nucleotide sequence ID" value="XM_005547163.4"/>
</dbReference>
<dbReference type="RefSeq" id="XP_005547222.2">
    <property type="nucleotide sequence ID" value="XM_005547165.2"/>
</dbReference>
<dbReference type="RefSeq" id="XP_005547223.1">
    <property type="nucleotide sequence ID" value="XM_005547166.2"/>
</dbReference>
<dbReference type="RefSeq" id="XP_005547224.1">
    <property type="nucleotide sequence ID" value="XM_005547167.2"/>
</dbReference>
<dbReference type="RefSeq" id="XP_015301412.1">
    <property type="nucleotide sequence ID" value="XM_015445926.1"/>
</dbReference>
<dbReference type="RefSeq" id="XP_015301413.1">
    <property type="nucleotide sequence ID" value="XM_015445927.1"/>
</dbReference>
<dbReference type="RefSeq" id="XP_065396688.1">
    <property type="nucleotide sequence ID" value="XM_065540616.1"/>
</dbReference>
<dbReference type="RefSeq" id="XP_065396689.1">
    <property type="nucleotide sequence ID" value="XM_065540617.1"/>
</dbReference>
<dbReference type="SMR" id="Q95KG9"/>
<dbReference type="STRING" id="9541.ENSMFAP00000023321"/>
<dbReference type="GeneID" id="102126726"/>
<dbReference type="KEGG" id="mcf:102126726"/>
<dbReference type="CTD" id="84315"/>
<dbReference type="eggNOG" id="KOG0997">
    <property type="taxonomic scope" value="Eukaryota"/>
</dbReference>
<dbReference type="Proteomes" id="UP000233100">
    <property type="component" value="Unplaced"/>
</dbReference>
<dbReference type="GO" id="GO:0035658">
    <property type="term" value="C:Mon1-Ccz1 complex"/>
    <property type="evidence" value="ECO:0000250"/>
    <property type="project" value="UniProtKB"/>
</dbReference>
<dbReference type="GO" id="GO:0005085">
    <property type="term" value="F:guanyl-nucleotide exchange factor activity"/>
    <property type="evidence" value="ECO:0000250"/>
    <property type="project" value="UniProtKB"/>
</dbReference>
<dbReference type="GO" id="GO:0009306">
    <property type="term" value="P:protein secretion"/>
    <property type="evidence" value="ECO:0007669"/>
    <property type="project" value="TreeGrafter"/>
</dbReference>
<dbReference type="GO" id="GO:0006623">
    <property type="term" value="P:protein targeting to vacuole"/>
    <property type="evidence" value="ECO:0007669"/>
    <property type="project" value="InterPro"/>
</dbReference>
<dbReference type="GO" id="GO:0016192">
    <property type="term" value="P:vesicle-mediated transport"/>
    <property type="evidence" value="ECO:0007669"/>
    <property type="project" value="InterPro"/>
</dbReference>
<dbReference type="InterPro" id="IPR043972">
    <property type="entry name" value="FUZ/MON1/HPS1_longin_1"/>
</dbReference>
<dbReference type="InterPro" id="IPR043971">
    <property type="entry name" value="FUZ/MON1/HPS1_longin_2"/>
</dbReference>
<dbReference type="InterPro" id="IPR043970">
    <property type="entry name" value="FUZ/MON1/HPS1_longin_3"/>
</dbReference>
<dbReference type="InterPro" id="IPR004353">
    <property type="entry name" value="Mon1"/>
</dbReference>
<dbReference type="PANTHER" id="PTHR13027">
    <property type="entry name" value="SAND PROTEIN-RELATED"/>
    <property type="match status" value="1"/>
</dbReference>
<dbReference type="PANTHER" id="PTHR13027:SF14">
    <property type="entry name" value="VACUOLAR FUSION PROTEIN MON1 HOMOLOG A"/>
    <property type="match status" value="1"/>
</dbReference>
<dbReference type="Pfam" id="PF19036">
    <property type="entry name" value="Fuz_longin_1"/>
    <property type="match status" value="1"/>
</dbReference>
<dbReference type="Pfam" id="PF19037">
    <property type="entry name" value="Fuz_longin_2"/>
    <property type="match status" value="1"/>
</dbReference>
<dbReference type="Pfam" id="PF19038">
    <property type="entry name" value="Fuz_longin_3"/>
    <property type="match status" value="1"/>
</dbReference>
<dbReference type="PRINTS" id="PR01546">
    <property type="entry name" value="YEAST73DUF"/>
</dbReference>
<reference key="1">
    <citation type="submission" date="2001-04" db="EMBL/GenBank/DDBJ databases">
        <title>Isolation of full-length cDNA clones from macaque brain cDNA libraries.</title>
        <authorList>
            <person name="Osada N."/>
            <person name="Hida M."/>
            <person name="Kusuda J."/>
            <person name="Tanuma R."/>
            <person name="Iseki K."/>
            <person name="Hirai M."/>
            <person name="Terao K."/>
            <person name="Suzuki Y."/>
            <person name="Sugano S."/>
            <person name="Hashimoto K."/>
        </authorList>
    </citation>
    <scope>NUCLEOTIDE SEQUENCE [LARGE SCALE MRNA]</scope>
    <source>
        <tissue>Temporal cortex</tissue>
    </source>
</reference>